<sequence>MDVNPTLLFLKVPAQNAISTTFPYTGDPPYSHGTGTGYTMDTVNRTHQYSEKGKWTTNTETGAPQLNPIDGPLPEDNEPSGYAQTDCVLEAMAFLEESHPGIFENSCLETMEVIQQTRVDKLTQGRQTYDWTLNRNQPAATALANTIEVFRSNGLTANESGRLIDFLKDVIESMDKEEMEITTHFQRKRRVRDNMTKKMVTQRTIGKKKQRLNKRIYLIRALTLNTMTKDAERGKLKRRAIATPGMQIRGFVYFVETLARSICENLEQSGLPVGGNEKKAKLANVVRKMMTNSQDTELSFTITGDNTKWNENQNPRMFLAMITYITRNQPEWFRNVLSIAPIMFSNKMARLGKGYMFKSKSMKLRTQIPAEMLTSIDLKYFNESTRKKIEKIRPLLIDGTVSLSPGMMMGMFNMLSTVLGVSILNLGQKKYTKTTYWWDGLQSSDDFALIVNAPNHEGIQAGVDRFYRTCKLVGINMSKKKSYTNRTGTFEFTSFFYRYGFVANFSMELPSFGVSGINESDDMSIGVTVIKNNMINNDLGPATAQMALQLFIKDYRYTYRCHRGDTQIQTRRSFELKKLWEQTRSKAGLLISDGGPNLYNIRNLHIPEVCLKWELMDEDYQGRLCNPLNPFVSHKEIESVNNAVVMPAHGPAKSMEYDAVATTHSWIPKRNRSILNTSQRGILEDQQMYQKCCNLFEKFFPSSSYRRPVGISSMVEAMVSRARIDARIDFESGRIKKEEFAEIMKICSTIEELRRQK</sequence>
<name>RDRP_I57A2</name>
<feature type="chain" id="PRO_0000078758" description="RNA-directed RNA polymerase catalytic subunit">
    <location>
        <begin position="1"/>
        <end position="757"/>
    </location>
</feature>
<feature type="domain" description="RdRp catalytic" evidence="1">
    <location>
        <begin position="286"/>
        <end position="483"/>
    </location>
</feature>
<feature type="region of interest" description="Disordered" evidence="2">
    <location>
        <begin position="50"/>
        <end position="82"/>
    </location>
</feature>
<feature type="region of interest" description="Promoter-binding site" evidence="1">
    <location>
        <begin position="249"/>
        <end position="256"/>
    </location>
</feature>
<feature type="short sequence motif" description="Nuclear localization signal" evidence="1">
    <location>
        <begin position="187"/>
        <end position="195"/>
    </location>
</feature>
<feature type="short sequence motif" description="Nuclear localization signal" evidence="1">
    <location>
        <begin position="203"/>
        <end position="216"/>
    </location>
</feature>
<feature type="compositionally biased region" description="Polar residues" evidence="2">
    <location>
        <begin position="55"/>
        <end position="64"/>
    </location>
</feature>
<gene>
    <name evidence="1" type="primary">PB1</name>
</gene>
<keyword id="KW-1262">Eukaryotic host gene expression shutoff by virus</keyword>
<keyword id="KW-1191">Eukaryotic host transcription shutoff by virus</keyword>
<keyword id="KW-1035">Host cytoplasm</keyword>
<keyword id="KW-1190">Host gene expression shutoff by virus</keyword>
<keyword id="KW-1048">Host nucleus</keyword>
<keyword id="KW-0945">Host-virus interaction</keyword>
<keyword id="KW-1104">Inhibition of host RNA polymerase II by virus</keyword>
<keyword id="KW-0547">Nucleotide-binding</keyword>
<keyword id="KW-0548">Nucleotidyltransferase</keyword>
<keyword id="KW-0597">Phosphoprotein</keyword>
<keyword id="KW-0696">RNA-directed RNA polymerase</keyword>
<keyword id="KW-0808">Transferase</keyword>
<keyword id="KW-0693">Viral RNA replication</keyword>
<keyword id="KW-1195">Viral transcription</keyword>
<proteinExistence type="inferred from homology"/>
<organism>
    <name type="scientific">Influenza A virus (strain A/Leningrad/134/17/1957 H2N2)</name>
    <dbReference type="NCBI Taxonomy" id="380984"/>
    <lineage>
        <taxon>Viruses</taxon>
        <taxon>Riboviria</taxon>
        <taxon>Orthornavirae</taxon>
        <taxon>Negarnaviricota</taxon>
        <taxon>Polyploviricotina</taxon>
        <taxon>Insthoviricetes</taxon>
        <taxon>Articulavirales</taxon>
        <taxon>Orthomyxoviridae</taxon>
        <taxon>Alphainfluenzavirus</taxon>
        <taxon>Alphainfluenzavirus influenzae</taxon>
        <taxon>Influenza A virus</taxon>
    </lineage>
</organism>
<organismHost>
    <name type="scientific">Aves</name>
    <dbReference type="NCBI Taxonomy" id="8782"/>
</organismHost>
<organismHost>
    <name type="scientific">Homo sapiens</name>
    <name type="common">Human</name>
    <dbReference type="NCBI Taxonomy" id="9606"/>
</organismHost>
<comment type="function">
    <text evidence="1">RNA-dependent RNA polymerase which is responsible for replication and transcription of virus RNA segments. The transcription of viral mRNAs occurs by a unique mechanism called cap-snatching. 5' methylated caps of cellular mRNAs are cleaved after 10-13 nucleotides by PA. In turn, these short capped RNAs are used as primers by PB1 for transcription of viral mRNAs. During virus replication, PB1 initiates RNA synthesis and copy vRNA into complementary RNA (cRNA) which in turn serves as a template for the production of more vRNAs.</text>
</comment>
<comment type="catalytic activity">
    <reaction evidence="1">
        <text>RNA(n) + a ribonucleoside 5'-triphosphate = RNA(n+1) + diphosphate</text>
        <dbReference type="Rhea" id="RHEA:21248"/>
        <dbReference type="Rhea" id="RHEA-COMP:14527"/>
        <dbReference type="Rhea" id="RHEA-COMP:17342"/>
        <dbReference type="ChEBI" id="CHEBI:33019"/>
        <dbReference type="ChEBI" id="CHEBI:61557"/>
        <dbReference type="ChEBI" id="CHEBI:140395"/>
        <dbReference type="EC" id="2.7.7.48"/>
    </reaction>
</comment>
<comment type="subunit">
    <text evidence="1">Influenza RNA polymerase is composed of three subunits: PB1, PB2 and PA. Interacts (via N-terminus) with PA (via C-terminus). Interacts (via C-terminus) with PB2 (via N-terminus); this interaction is essential for transcription initiation.</text>
</comment>
<comment type="subcellular location">
    <subcellularLocation>
        <location evidence="1">Host nucleus</location>
    </subcellularLocation>
    <subcellularLocation>
        <location evidence="1">Host cytoplasm</location>
    </subcellularLocation>
</comment>
<comment type="PTM">
    <text evidence="1">Phosphorylated by host PRKCA.</text>
</comment>
<comment type="similarity">
    <text evidence="1">Belongs to the influenza viruses polymerase PB1 family.</text>
</comment>
<dbReference type="EC" id="2.7.7.48" evidence="1"/>
<dbReference type="EMBL" id="M81580">
    <property type="protein sequence ID" value="AAA19211.1"/>
    <property type="molecule type" value="Unassigned_RNA"/>
</dbReference>
<dbReference type="SMR" id="P26120"/>
<dbReference type="GO" id="GO:0030430">
    <property type="term" value="C:host cell cytoplasm"/>
    <property type="evidence" value="ECO:0007669"/>
    <property type="project" value="UniProtKB-SubCell"/>
</dbReference>
<dbReference type="GO" id="GO:0042025">
    <property type="term" value="C:host cell nucleus"/>
    <property type="evidence" value="ECO:0007669"/>
    <property type="project" value="UniProtKB-SubCell"/>
</dbReference>
<dbReference type="GO" id="GO:0000166">
    <property type="term" value="F:nucleotide binding"/>
    <property type="evidence" value="ECO:0007669"/>
    <property type="project" value="UniProtKB-UniRule"/>
</dbReference>
<dbReference type="GO" id="GO:0003723">
    <property type="term" value="F:RNA binding"/>
    <property type="evidence" value="ECO:0007669"/>
    <property type="project" value="InterPro"/>
</dbReference>
<dbReference type="GO" id="GO:0003968">
    <property type="term" value="F:RNA-directed RNA polymerase activity"/>
    <property type="evidence" value="ECO:0007669"/>
    <property type="project" value="UniProtKB-UniRule"/>
</dbReference>
<dbReference type="GO" id="GO:0006351">
    <property type="term" value="P:DNA-templated transcription"/>
    <property type="evidence" value="ECO:0007669"/>
    <property type="project" value="UniProtKB-UniRule"/>
</dbReference>
<dbReference type="GO" id="GO:0039657">
    <property type="term" value="P:symbiont-mediated suppression of host gene expression"/>
    <property type="evidence" value="ECO:0007669"/>
    <property type="project" value="UniProtKB-KW"/>
</dbReference>
<dbReference type="GO" id="GO:0039523">
    <property type="term" value="P:symbiont-mediated suppression of host mRNA transcription via inhibition of RNA polymerase II activity"/>
    <property type="evidence" value="ECO:0007669"/>
    <property type="project" value="UniProtKB-UniRule"/>
</dbReference>
<dbReference type="GO" id="GO:0039694">
    <property type="term" value="P:viral RNA genome replication"/>
    <property type="evidence" value="ECO:0007669"/>
    <property type="project" value="UniProtKB-UniRule"/>
</dbReference>
<dbReference type="GO" id="GO:0019083">
    <property type="term" value="P:viral transcription"/>
    <property type="evidence" value="ECO:0007669"/>
    <property type="project" value="UniProtKB-KW"/>
</dbReference>
<dbReference type="Gene3D" id="6.10.140.720">
    <property type="match status" value="1"/>
</dbReference>
<dbReference type="HAMAP" id="MF_04065">
    <property type="entry name" value="INFV_RDRP"/>
    <property type="match status" value="1"/>
</dbReference>
<dbReference type="InterPro" id="IPR007099">
    <property type="entry name" value="RNA-dir_pol_NSvirus"/>
</dbReference>
<dbReference type="InterPro" id="IPR001407">
    <property type="entry name" value="RNA_pol_PB1_influenza"/>
</dbReference>
<dbReference type="Pfam" id="PF00602">
    <property type="entry name" value="Flu_PB1"/>
    <property type="match status" value="1"/>
</dbReference>
<dbReference type="PIRSF" id="PIRSF000827">
    <property type="entry name" value="RdRPol_OMV"/>
    <property type="match status" value="1"/>
</dbReference>
<dbReference type="PROSITE" id="PS50525">
    <property type="entry name" value="RDRP_SSRNA_NEG_SEG"/>
    <property type="match status" value="1"/>
</dbReference>
<evidence type="ECO:0000255" key="1">
    <source>
        <dbReference type="HAMAP-Rule" id="MF_04065"/>
    </source>
</evidence>
<evidence type="ECO:0000256" key="2">
    <source>
        <dbReference type="SAM" id="MobiDB-lite"/>
    </source>
</evidence>
<protein>
    <recommendedName>
        <fullName evidence="1">RNA-directed RNA polymerase catalytic subunit</fullName>
        <ecNumber evidence="1">2.7.7.48</ecNumber>
    </recommendedName>
    <alternativeName>
        <fullName evidence="1">Polymerase basic protein 1</fullName>
        <shortName evidence="1">PB1</shortName>
    </alternativeName>
    <alternativeName>
        <fullName evidence="1">RNA-directed RNA polymerase subunit P1</fullName>
    </alternativeName>
</protein>
<accession>P26120</accession>
<reference key="1">
    <citation type="journal article" date="1992" name="Virology">
        <title>Sequence changes in the live attenuated, cold-adapted variants of influenza A/Leningrad/134/57 (H2N2) virus.</title>
        <authorList>
            <person name="Klimov A.I."/>
            <person name="Cox N.J."/>
            <person name="Yotov W.V."/>
            <person name="Rocha E."/>
            <person name="Alexandrova G.I."/>
            <person name="Kendal A.P."/>
        </authorList>
    </citation>
    <scope>NUCLEOTIDE SEQUENCE</scope>
</reference>